<name>LV1B_MOUSE</name>
<dbReference type="PIR" id="B93815">
    <property type="entry name" value="L1MS4E"/>
</dbReference>
<dbReference type="PIR" id="PH1089">
    <property type="entry name" value="PH1089"/>
</dbReference>
<dbReference type="PDB" id="1A6U">
    <property type="method" value="X-ray"/>
    <property type="resolution" value="2.10 A"/>
    <property type="chains" value="L=21-128"/>
</dbReference>
<dbReference type="PDB" id="1A6V">
    <property type="method" value="X-ray"/>
    <property type="resolution" value="1.80 A"/>
    <property type="chains" value="L/M/N=20-128"/>
</dbReference>
<dbReference type="PDB" id="1A6W">
    <property type="method" value="X-ray"/>
    <property type="resolution" value="2.00 A"/>
    <property type="chains" value="L=21-128"/>
</dbReference>
<dbReference type="PDB" id="1DL7">
    <property type="method" value="X-ray"/>
    <property type="resolution" value="2.35 A"/>
    <property type="chains" value="L=20-128"/>
</dbReference>
<dbReference type="PDB" id="1OAQ">
    <property type="method" value="X-ray"/>
    <property type="resolution" value="1.50 A"/>
    <property type="chains" value="L=20-129"/>
</dbReference>
<dbReference type="PDB" id="1OAR">
    <property type="method" value="X-ray"/>
    <property type="resolution" value="2.23 A"/>
    <property type="chains" value="L/M/N/O=20-128"/>
</dbReference>
<dbReference type="PDB" id="1OAU">
    <property type="method" value="X-ray"/>
    <property type="resolution" value="1.80 A"/>
    <property type="chains" value="L/M/N/O=20-128"/>
</dbReference>
<dbReference type="PDB" id="1OAX">
    <property type="method" value="X-ray"/>
    <property type="resolution" value="2.67 A"/>
    <property type="chains" value="L/M/N/O=20-128"/>
</dbReference>
<dbReference type="PDB" id="1OAY">
    <property type="method" value="X-ray"/>
    <property type="resolution" value="2.66 A"/>
    <property type="chains" value="L/M/N/O=20-128"/>
</dbReference>
<dbReference type="PDB" id="1OAZ">
    <property type="method" value="X-ray"/>
    <property type="resolution" value="2.78 A"/>
    <property type="chains" value="L/N=20-128"/>
</dbReference>
<dbReference type="PDB" id="1OCW">
    <property type="method" value="X-ray"/>
    <property type="resolution" value="2.00 A"/>
    <property type="chains" value="L=20-128"/>
</dbReference>
<dbReference type="PDB" id="1Q0Y">
    <property type="method" value="X-ray"/>
    <property type="resolution" value="2.00 A"/>
    <property type="chains" value="L=21-129"/>
</dbReference>
<dbReference type="PDB" id="2BJM">
    <property type="method" value="X-ray"/>
    <property type="resolution" value="2.15 A"/>
    <property type="chains" value="L=20-128"/>
</dbReference>
<dbReference type="PDBsum" id="1A6U"/>
<dbReference type="PDBsum" id="1A6V"/>
<dbReference type="PDBsum" id="1A6W"/>
<dbReference type="PDBsum" id="1DL7"/>
<dbReference type="PDBsum" id="1OAQ"/>
<dbReference type="PDBsum" id="1OAR"/>
<dbReference type="PDBsum" id="1OAU"/>
<dbReference type="PDBsum" id="1OAX"/>
<dbReference type="PDBsum" id="1OAY"/>
<dbReference type="PDBsum" id="1OAZ"/>
<dbReference type="PDBsum" id="1OCW"/>
<dbReference type="PDBsum" id="1Q0Y"/>
<dbReference type="PDBsum" id="2BJM"/>
<dbReference type="SMR" id="P01724"/>
<dbReference type="FunCoup" id="P01724">
    <property type="interactions" value="796"/>
</dbReference>
<dbReference type="MINT" id="P01724"/>
<dbReference type="InParanoid" id="P01724"/>
<dbReference type="PhylomeDB" id="P01724"/>
<dbReference type="EvolutionaryTrace" id="P01724"/>
<dbReference type="Proteomes" id="UP000000589">
    <property type="component" value="Unplaced"/>
</dbReference>
<dbReference type="RNAct" id="P01724">
    <property type="molecule type" value="protein"/>
</dbReference>
<dbReference type="GO" id="GO:0019814">
    <property type="term" value="C:immunoglobulin complex"/>
    <property type="evidence" value="ECO:0000318"/>
    <property type="project" value="GO_Central"/>
</dbReference>
<dbReference type="GO" id="GO:0002250">
    <property type="term" value="P:adaptive immune response"/>
    <property type="evidence" value="ECO:0007669"/>
    <property type="project" value="UniProtKB-KW"/>
</dbReference>
<dbReference type="GO" id="GO:0006955">
    <property type="term" value="P:immune response"/>
    <property type="evidence" value="ECO:0000318"/>
    <property type="project" value="GO_Central"/>
</dbReference>
<dbReference type="CDD" id="cd04984">
    <property type="entry name" value="IgV_L_lambda"/>
    <property type="match status" value="1"/>
</dbReference>
<dbReference type="FunFam" id="2.60.40.10:FF:002073">
    <property type="entry name" value="Ig lambda-1 chain V regions MOPC 104E/RPC20/J558/S104"/>
    <property type="match status" value="1"/>
</dbReference>
<dbReference type="Gene3D" id="2.60.40.10">
    <property type="entry name" value="Immunoglobulins"/>
    <property type="match status" value="1"/>
</dbReference>
<dbReference type="InterPro" id="IPR007110">
    <property type="entry name" value="Ig-like_dom"/>
</dbReference>
<dbReference type="InterPro" id="IPR036179">
    <property type="entry name" value="Ig-like_dom_sf"/>
</dbReference>
<dbReference type="InterPro" id="IPR013783">
    <property type="entry name" value="Ig-like_fold"/>
</dbReference>
<dbReference type="InterPro" id="IPR003599">
    <property type="entry name" value="Ig_sub"/>
</dbReference>
<dbReference type="InterPro" id="IPR013106">
    <property type="entry name" value="Ig_V-set"/>
</dbReference>
<dbReference type="InterPro" id="IPR050150">
    <property type="entry name" value="IgV_Light_Chain"/>
</dbReference>
<dbReference type="PANTHER" id="PTHR23267">
    <property type="entry name" value="IMMUNOGLOBULIN LIGHT CHAIN"/>
    <property type="match status" value="1"/>
</dbReference>
<dbReference type="Pfam" id="PF07686">
    <property type="entry name" value="V-set"/>
    <property type="match status" value="1"/>
</dbReference>
<dbReference type="SMART" id="SM00409">
    <property type="entry name" value="IG"/>
    <property type="match status" value="1"/>
</dbReference>
<dbReference type="SMART" id="SM00406">
    <property type="entry name" value="IGv"/>
    <property type="match status" value="1"/>
</dbReference>
<dbReference type="SUPFAM" id="SSF48726">
    <property type="entry name" value="Immunoglobulin"/>
    <property type="match status" value="1"/>
</dbReference>
<dbReference type="PROSITE" id="PS50835">
    <property type="entry name" value="IG_LIKE"/>
    <property type="match status" value="1"/>
</dbReference>
<sequence length="129" mass="13479">MAWISLILSLLALSSGAISQAVVTQESALTTSPGETVTLTCRSSTGAVTTSNYANWVQQKPDHLFTGLIGGTNNRAPGVPARFSGSLIGNKAALTITGAQTEDEAIYFCALWYSNHWVFGGGTKLTVLG</sequence>
<reference key="1">
    <citation type="journal article" date="1977" name="Proc. Natl. Acad. Sci. U.S.A.">
        <title>Amino acid sequence of the NH2-terminal extra piece segments of the precursors of mouse immunoglobulin lambda1-type and kappa-type light chains.</title>
        <authorList>
            <person name="Burstein Y."/>
            <person name="Schechter I."/>
        </authorList>
    </citation>
    <scope>PROTEIN SEQUENCE OF 1-29 (PRECURSOR PROTEIN)</scope>
    <scope>SEQUENCE REVISION TO 20 AND 26</scope>
</reference>
<reference key="2">
    <citation type="journal article" date="1971" name="Proc. Natl. Acad. Sci. U.S.A.">
        <title>Amino acid sequences of two mouse immunoglobulin lambda chains.</title>
        <authorList>
            <person name="Appella E."/>
        </authorList>
    </citation>
    <scope>PROTEIN SEQUENCE OF 20-129</scope>
    <scope>PYROGLUTAMATE FORMATION AT GLN-20</scope>
</reference>
<reference key="3">
    <citation type="journal article" date="1973" name="Proc. Natl. Acad. Sci. U.S.A.">
        <title>Mouse lambda-chain sequences.</title>
        <authorList>
            <person name="Cesari I.M."/>
            <person name="Weigert M."/>
        </authorList>
    </citation>
    <scope>PROTEIN SEQUENCE OF 20-129 (J558 AND S104)</scope>
</reference>
<feature type="signal peptide" evidence="1 2 3">
    <location>
        <begin position="1"/>
        <end position="19"/>
    </location>
</feature>
<feature type="chain" id="PRO_0000015202" description="Ig lambda-1 chain V regions MOPC 104E/RPC20/J558/S104">
    <location>
        <begin position="20"/>
        <end position="129"/>
    </location>
</feature>
<feature type="domain" description="Ig-like">
    <location>
        <begin position="20"/>
        <end position="125"/>
    </location>
</feature>
<feature type="modified residue" description="Pyrrolidone carboxylic acid" evidence="3">
    <location>
        <position position="20"/>
    </location>
</feature>
<feature type="non-terminal residue">
    <location>
        <position position="129"/>
    </location>
</feature>
<feature type="strand" evidence="4">
    <location>
        <begin position="23"/>
        <end position="25"/>
    </location>
</feature>
<feature type="strand" evidence="4">
    <location>
        <begin position="27"/>
        <end position="31"/>
    </location>
</feature>
<feature type="strand" evidence="4">
    <location>
        <begin position="36"/>
        <end position="43"/>
    </location>
</feature>
<feature type="strand" evidence="5">
    <location>
        <begin position="44"/>
        <end position="46"/>
    </location>
</feature>
<feature type="helix" evidence="4">
    <location>
        <begin position="50"/>
        <end position="52"/>
    </location>
</feature>
<feature type="strand" evidence="4">
    <location>
        <begin position="55"/>
        <end position="60"/>
    </location>
</feature>
<feature type="turn" evidence="4">
    <location>
        <begin position="61"/>
        <end position="63"/>
    </location>
</feature>
<feature type="strand" evidence="4">
    <location>
        <begin position="64"/>
        <end position="70"/>
    </location>
</feature>
<feature type="turn" evidence="4">
    <location>
        <begin position="71"/>
        <end position="73"/>
    </location>
</feature>
<feature type="strand" evidence="4">
    <location>
        <begin position="83"/>
        <end position="88"/>
    </location>
</feature>
<feature type="strand" evidence="4">
    <location>
        <begin position="91"/>
        <end position="98"/>
    </location>
</feature>
<feature type="helix" evidence="4">
    <location>
        <begin position="101"/>
        <end position="103"/>
    </location>
</feature>
<feature type="strand" evidence="4">
    <location>
        <begin position="105"/>
        <end position="113"/>
    </location>
</feature>
<feature type="strand" evidence="4">
    <location>
        <begin position="116"/>
        <end position="119"/>
    </location>
</feature>
<feature type="strand" evidence="4">
    <location>
        <begin position="123"/>
        <end position="127"/>
    </location>
</feature>
<organism>
    <name type="scientific">Mus musculus</name>
    <name type="common">Mouse</name>
    <dbReference type="NCBI Taxonomy" id="10090"/>
    <lineage>
        <taxon>Eukaryota</taxon>
        <taxon>Metazoa</taxon>
        <taxon>Chordata</taxon>
        <taxon>Craniata</taxon>
        <taxon>Vertebrata</taxon>
        <taxon>Euteleostomi</taxon>
        <taxon>Mammalia</taxon>
        <taxon>Eutheria</taxon>
        <taxon>Euarchontoglires</taxon>
        <taxon>Glires</taxon>
        <taxon>Rodentia</taxon>
        <taxon>Myomorpha</taxon>
        <taxon>Muroidea</taxon>
        <taxon>Muridae</taxon>
        <taxon>Murinae</taxon>
        <taxon>Mus</taxon>
        <taxon>Mus</taxon>
    </lineage>
</organism>
<protein>
    <recommendedName>
        <fullName>Ig lambda-1 chain V regions MOPC 104E/RPC20/J558/S104</fullName>
    </recommendedName>
</protein>
<accession>P01724</accession>
<keyword id="KW-0002">3D-structure</keyword>
<keyword id="KW-1064">Adaptive immunity</keyword>
<keyword id="KW-0903">Direct protein sequencing</keyword>
<keyword id="KW-0391">Immunity</keyword>
<keyword id="KW-1280">Immunoglobulin</keyword>
<keyword id="KW-0873">Pyrrolidone carboxylic acid</keyword>
<keyword id="KW-1185">Reference proteome</keyword>
<keyword id="KW-0732">Signal</keyword>
<comment type="miscellaneous">
    <text>Compositions and partial sequences of RPC 20 show no differences from MOPC 104E. The sequences of J558 and S104 seems identical with that shown.</text>
</comment>
<comment type="miscellaneous">
    <text>These proteins were isolated from serum or urine of tumor-bearing mice.</text>
</comment>
<evidence type="ECO:0000269" key="1">
    <source>
    </source>
</evidence>
<evidence type="ECO:0000269" key="2">
    <source>
    </source>
</evidence>
<evidence type="ECO:0000269" key="3">
    <source>
    </source>
</evidence>
<evidence type="ECO:0007829" key="4">
    <source>
        <dbReference type="PDB" id="1OAQ"/>
    </source>
</evidence>
<evidence type="ECO:0007829" key="5">
    <source>
        <dbReference type="PDB" id="1OAY"/>
    </source>
</evidence>
<proteinExistence type="evidence at protein level"/>